<keyword id="KW-0028">Amino-acid biosynthesis</keyword>
<keyword id="KW-0198">Cysteine biosynthesis</keyword>
<keyword id="KW-0456">Lyase</keyword>
<keyword id="KW-1185">Reference proteome</keyword>
<sequence length="454" mass="50402">MASHLIDFLLIGNNFGTPEMRAVWSEQNRLTRQVDVEIALALAEGDLGVIPQDAASTIASHANASALNIEEIAQDAVRMKHSLMPTIAAIQRQCGEAGEYIHYGVTTQDVVDTATVLQLRQAFDIVVRDTRLVAIELKRLAKKHQHTLMTGRTHGMQALPTTFGFKLAVWLDEFVRHLQRLNEIRERVLVGNINGAIGTYASFGELGPEIERHTLTRLGLNTPNIGWQSARDRFSEYASVTVLISGTLGKIGNELYNLMRTEINEIEEPFSEGKIGSTTMPHKRNPAALEGLASLTAPLFKSAALIHESMKVEHERDAMSWRAEWIALPEINIYLSAQLQNALGILRGMSVNEKQMRANLDLQNGLLLSEKVMFEIGKLLGKQTAHHLVYECSMAAFEQNREFKALLLEHPVLSQHLTADTLDTWLDPANYVGSAPQKVDEVIRYADGTGLLAE</sequence>
<feature type="chain" id="PRO_0000458829" description="N-acetyl-S-(2-succino)cysteine lyase">
    <location>
        <begin position="1"/>
        <end position="454"/>
    </location>
</feature>
<feature type="active site" description="Proton donor/acceptor" evidence="1">
    <location>
        <position position="154"/>
    </location>
</feature>
<feature type="active site" description="Proton donor/acceptor" evidence="1">
    <location>
        <position position="277"/>
    </location>
</feature>
<feature type="binding site" evidence="1">
    <location>
        <begin position="106"/>
        <end position="107"/>
    </location>
    <ligand>
        <name>fumarate</name>
        <dbReference type="ChEBI" id="CHEBI:29806"/>
    </ligand>
</feature>
<feature type="binding site" evidence="1">
    <location>
        <position position="233"/>
    </location>
    <ligand>
        <name>fumarate</name>
        <dbReference type="ChEBI" id="CHEBI:29806"/>
    </ligand>
</feature>
<feature type="binding site" evidence="1">
    <location>
        <position position="278"/>
    </location>
    <ligand>
        <name>fumarate</name>
        <dbReference type="ChEBI" id="CHEBI:29806"/>
    </ligand>
</feature>
<feature type="binding site" evidence="1">
    <location>
        <begin position="283"/>
        <end position="285"/>
    </location>
    <ligand>
        <name>fumarate</name>
        <dbReference type="ChEBI" id="CHEBI:29806"/>
    </ligand>
</feature>
<dbReference type="EC" id="4.3.2.-" evidence="2"/>
<dbReference type="EMBL" id="CP002038">
    <property type="protein sequence ID" value="ADN00444.1"/>
    <property type="molecule type" value="Genomic_DNA"/>
</dbReference>
<dbReference type="RefSeq" id="WP_013319842.1">
    <property type="nucleotide sequence ID" value="NC_014500.1"/>
</dbReference>
<dbReference type="SMR" id="E0SKP1"/>
<dbReference type="STRING" id="198628.Dda3937_00284"/>
<dbReference type="KEGG" id="ddd:Dda3937_00284"/>
<dbReference type="PATRIC" id="fig|198628.6.peg.4190"/>
<dbReference type="eggNOG" id="COG0015">
    <property type="taxonomic scope" value="Bacteria"/>
</dbReference>
<dbReference type="HOGENOM" id="CLU_030949_0_1_6"/>
<dbReference type="OrthoDB" id="9768878at2"/>
<dbReference type="UniPathway" id="UPA00136"/>
<dbReference type="Proteomes" id="UP000006859">
    <property type="component" value="Chromosome"/>
</dbReference>
<dbReference type="GO" id="GO:0005829">
    <property type="term" value="C:cytosol"/>
    <property type="evidence" value="ECO:0007669"/>
    <property type="project" value="TreeGrafter"/>
</dbReference>
<dbReference type="GO" id="GO:0070626">
    <property type="term" value="F:(S)-2-(5-amino-1-(5-phospho-D-ribosyl)imidazole-4-carboxamido) succinate lyase (fumarate-forming) activity"/>
    <property type="evidence" value="ECO:0007669"/>
    <property type="project" value="TreeGrafter"/>
</dbReference>
<dbReference type="GO" id="GO:0004018">
    <property type="term" value="F:N6-(1,2-dicarboxyethyl)AMP AMP-lyase (fumarate-forming) activity"/>
    <property type="evidence" value="ECO:0007669"/>
    <property type="project" value="InterPro"/>
</dbReference>
<dbReference type="GO" id="GO:0044208">
    <property type="term" value="P:'de novo' AMP biosynthetic process"/>
    <property type="evidence" value="ECO:0007669"/>
    <property type="project" value="TreeGrafter"/>
</dbReference>
<dbReference type="GO" id="GO:0019344">
    <property type="term" value="P:cysteine biosynthetic process"/>
    <property type="evidence" value="ECO:0007669"/>
    <property type="project" value="UniProtKB-UniPathway"/>
</dbReference>
<dbReference type="CDD" id="cd01597">
    <property type="entry name" value="pCLME"/>
    <property type="match status" value="1"/>
</dbReference>
<dbReference type="FunFam" id="1.20.200.10:FF:000014">
    <property type="entry name" value="3-carboxy-cis,cis-muconate cycloisomerase"/>
    <property type="match status" value="1"/>
</dbReference>
<dbReference type="Gene3D" id="1.10.40.30">
    <property type="entry name" value="Fumarase/aspartase (C-terminal domain)"/>
    <property type="match status" value="1"/>
</dbReference>
<dbReference type="Gene3D" id="1.20.200.10">
    <property type="entry name" value="Fumarase/aspartase (Central domain)"/>
    <property type="match status" value="1"/>
</dbReference>
<dbReference type="InterPro" id="IPR019468">
    <property type="entry name" value="AdenyloSucc_lyase_C"/>
</dbReference>
<dbReference type="InterPro" id="IPR020557">
    <property type="entry name" value="Fumarate_lyase_CS"/>
</dbReference>
<dbReference type="InterPro" id="IPR000362">
    <property type="entry name" value="Fumarate_lyase_fam"/>
</dbReference>
<dbReference type="InterPro" id="IPR022761">
    <property type="entry name" value="Fumarate_lyase_N"/>
</dbReference>
<dbReference type="InterPro" id="IPR008948">
    <property type="entry name" value="L-Aspartase-like"/>
</dbReference>
<dbReference type="InterPro" id="IPR004769">
    <property type="entry name" value="Pur_lyase"/>
</dbReference>
<dbReference type="NCBIfam" id="TIGR00928">
    <property type="entry name" value="purB"/>
    <property type="match status" value="1"/>
</dbReference>
<dbReference type="PANTHER" id="PTHR43172">
    <property type="entry name" value="ADENYLOSUCCINATE LYASE"/>
    <property type="match status" value="1"/>
</dbReference>
<dbReference type="PANTHER" id="PTHR43172:SF1">
    <property type="entry name" value="ADENYLOSUCCINATE LYASE"/>
    <property type="match status" value="1"/>
</dbReference>
<dbReference type="Pfam" id="PF10397">
    <property type="entry name" value="ADSL_C"/>
    <property type="match status" value="1"/>
</dbReference>
<dbReference type="Pfam" id="PF00206">
    <property type="entry name" value="Lyase_1"/>
    <property type="match status" value="1"/>
</dbReference>
<dbReference type="PRINTS" id="PR00145">
    <property type="entry name" value="ARGSUCLYASE"/>
</dbReference>
<dbReference type="PRINTS" id="PR00149">
    <property type="entry name" value="FUMRATELYASE"/>
</dbReference>
<dbReference type="SMART" id="SM00998">
    <property type="entry name" value="ADSL_C"/>
    <property type="match status" value="1"/>
</dbReference>
<dbReference type="SUPFAM" id="SSF48557">
    <property type="entry name" value="L-aspartase-like"/>
    <property type="match status" value="1"/>
</dbReference>
<dbReference type="PROSITE" id="PS00163">
    <property type="entry name" value="FUMARATE_LYASES"/>
    <property type="match status" value="1"/>
</dbReference>
<evidence type="ECO:0000250" key="1">
    <source>
        <dbReference type="UniProtKB" id="P0AB89"/>
    </source>
</evidence>
<evidence type="ECO:0000269" key="2">
    <source>
    </source>
</evidence>
<evidence type="ECO:0000303" key="3">
    <source>
    </source>
</evidence>
<evidence type="ECO:0000305" key="4"/>
<evidence type="ECO:0000305" key="5">
    <source>
    </source>
</evidence>
<evidence type="ECO:0000312" key="6">
    <source>
        <dbReference type="EMBL" id="ADN00444.1"/>
    </source>
</evidence>
<evidence type="ECO:0000312" key="7">
    <source>
        <dbReference type="Proteomes" id="UP000006859"/>
    </source>
</evidence>
<accession>E0SKP1</accession>
<gene>
    <name evidence="6" type="ordered locus">Dda3937_00284</name>
</gene>
<name>2SL_DICD3</name>
<protein>
    <recommendedName>
        <fullName evidence="5">N-acetyl-S-(2-succino)cysteine lyase</fullName>
        <ecNumber evidence="2">4.3.2.-</ecNumber>
    </recommendedName>
    <alternativeName>
        <fullName evidence="3">S-(2-succino) lyase</fullName>
        <shortName evidence="3">2SL</shortName>
    </alternativeName>
</protein>
<proteinExistence type="evidence at protein level"/>
<organism>
    <name type="scientific">Dickeya dadantii (strain 3937)</name>
    <name type="common">Erwinia chrysanthemi (strain 3937)</name>
    <dbReference type="NCBI Taxonomy" id="198628"/>
    <lineage>
        <taxon>Bacteria</taxon>
        <taxon>Pseudomonadati</taxon>
        <taxon>Pseudomonadota</taxon>
        <taxon>Gammaproteobacteria</taxon>
        <taxon>Enterobacterales</taxon>
        <taxon>Pectobacteriaceae</taxon>
        <taxon>Dickeya</taxon>
    </lineage>
</organism>
<reference key="1">
    <citation type="journal article" date="2011" name="J. Bacteriol.">
        <title>Genome sequence of the plant-pathogenic bacterium Dickeya dadantii 3937.</title>
        <authorList>
            <person name="Glasner J.D."/>
            <person name="Yang C.H."/>
            <person name="Reverchon S."/>
            <person name="Hugouvieux-Cotte-Pattat N."/>
            <person name="Condemine G."/>
            <person name="Bohin J.P."/>
            <person name="Van Gijsegem F."/>
            <person name="Yang S."/>
            <person name="Franza T."/>
            <person name="Expert D."/>
            <person name="Plunkett G. III"/>
            <person name="San Francisco M.J."/>
            <person name="Charkowski A.O."/>
            <person name="Py B."/>
            <person name="Bell K."/>
            <person name="Rauscher L."/>
            <person name="Rodriguez-Palenzuela P."/>
            <person name="Toussaint A."/>
            <person name="Holeva M.C."/>
            <person name="He S.Y."/>
            <person name="Douet V."/>
            <person name="Boccara M."/>
            <person name="Blanco C."/>
            <person name="Toth I."/>
            <person name="Anderson B.D."/>
            <person name="Biehl B.S."/>
            <person name="Mau B."/>
            <person name="Flynn S.M."/>
            <person name="Barras F."/>
            <person name="Lindeberg M."/>
            <person name="Birch P.R."/>
            <person name="Tsuyumu S."/>
            <person name="Shi X."/>
            <person name="Hibbing M."/>
            <person name="Yap M.N."/>
            <person name="Carpentier M."/>
            <person name="Dassa E."/>
            <person name="Umehara M."/>
            <person name="Kim J.F."/>
            <person name="Rusch M."/>
            <person name="Soni P."/>
            <person name="Mayhew G.F."/>
            <person name="Fouts D.E."/>
            <person name="Gill S.R."/>
            <person name="Blattner F.R."/>
            <person name="Keen N.T."/>
            <person name="Perna N.T."/>
        </authorList>
    </citation>
    <scope>NUCLEOTIDE SEQUENCE [LARGE SCALE GENOMIC DNA]</scope>
    <source>
        <strain evidence="6 7">3937</strain>
    </source>
</reference>
<reference key="2">
    <citation type="journal article" date="2022" name="J. Biol. Chem.">
        <title>Identification of a S-(2-succino)cysteine breakdown pathway that uses a novel S-(2-succino) lyase.</title>
        <authorList>
            <person name="Hillmann K.B."/>
            <person name="Goethel M.E."/>
            <person name="Erickson N.A."/>
            <person name="Niehaus T.D."/>
        </authorList>
    </citation>
    <scope>FUNCTION</scope>
    <scope>CATALYTIC ACTIVITY</scope>
    <scope>BIOPHYSICOCHEMICAL PROPERTIES</scope>
    <scope>PATHWAY</scope>
</reference>
<comment type="function">
    <text evidence="2">Catalyzes the cleavage of N-acetyl-S-(2-succino)cysteine into fumarate and N-acetylcysteine. Is involved in a S-(2-succino)cysteine (2SC) degradation pathway that allows the bacterium to recover cysteine from 2SC and to detoxify 2SC that may be a toxic metabolite. Can also perform the reverse reaction in vitro, and has minor activity against 2SC and other small molecule thiols.</text>
</comment>
<comment type="catalytic activity">
    <reaction evidence="2">
        <text>N-acetyl-S-(2-succino)-L-cysteine = N-acetyl-L-cysteine + fumarate</text>
        <dbReference type="Rhea" id="RHEA:76543"/>
        <dbReference type="ChEBI" id="CHEBI:29806"/>
        <dbReference type="ChEBI" id="CHEBI:78236"/>
        <dbReference type="ChEBI" id="CHEBI:144658"/>
    </reaction>
    <physiologicalReaction direction="left-to-right" evidence="5">
        <dbReference type="Rhea" id="RHEA:76544"/>
    </physiologicalReaction>
</comment>
<comment type="biophysicochemical properties">
    <kinetics>
        <KM evidence="2">1.2 mM for N-acetyl-S-(2-succino)-L-cysteine</KM>
        <KM evidence="2">0.69 mM for N-acetyl-L-cysteine</KM>
        <KM evidence="2">3.24 mM for fumarate</KM>
        <KM evidence="2">12.3 mM for S-(2-succino)-L-cysteine</KM>
        <KM evidence="2">19 mM for L-cysteine</KM>
        <Vmax evidence="2">0.4 umol/min/mg enzyme for the breakdown of N-acetyl-S-(2-succino)-L-cysteine to fumarate and N-acetyl-L-cysteine</Vmax>
        <Vmax evidence="2">27.6 umol/min/mg enzyme for the synthesis of N-acetyl-S-(2-succino)-L-cysteine from fumarate and N-acetyl-L-cysteine</Vmax>
        <Vmax evidence="2">0.069 umol/min/mg enzyme for the breakdown of S-(2-succino)-L-cysteine to fumarate and L-cysteine</Vmax>
        <Vmax evidence="2">11.1 umol/min/mg enzyme for the synthesis of S-(2-succino)-L-cysteine from fumarate and L-cysteine</Vmax>
        <text evidence="2">kcat is 0.35 sec(-1) for the breakdown of N-acetyl-S-(2-succino)-L-cysteine to fumarate and N-acetyl-L-cysteine. kcat is 24.2 sec(-1) for the synthesis of N-acetyl-S-(2-succino)-L-cysteine from fumarate and N-acetyl-L-cysteine. kcat is 0.060 sec(-1) for the breakdown of S-(2-succino)-L-cysteine to fumarate and L-cysteine. kcat is 9.7 sec(-1) for the synthesis of S-(2-succino)-L-cysteine from fumarate and L-cysteine.</text>
    </kinetics>
</comment>
<comment type="pathway">
    <text evidence="5">Amino-acid biosynthesis; L-cysteine biosynthesis.</text>
</comment>
<comment type="miscellaneous">
    <text evidence="2">Is able to complement a B.subtilis yxeK mutant in the ability to use 2SC as a sulfur source for growth.</text>
</comment>
<comment type="similarity">
    <text evidence="4">Belongs to the lyase 1 family.</text>
</comment>